<keyword id="KW-0520">NAD</keyword>
<keyword id="KW-0560">Oxidoreductase</keyword>
<keyword id="KW-0816">Tricarboxylic acid cycle</keyword>
<proteinExistence type="inferred from homology"/>
<organism>
    <name type="scientific">Anaplasma marginale (strain St. Maries)</name>
    <dbReference type="NCBI Taxonomy" id="234826"/>
    <lineage>
        <taxon>Bacteria</taxon>
        <taxon>Pseudomonadati</taxon>
        <taxon>Pseudomonadota</taxon>
        <taxon>Alphaproteobacteria</taxon>
        <taxon>Rickettsiales</taxon>
        <taxon>Anaplasmataceae</taxon>
        <taxon>Anaplasma</taxon>
    </lineage>
</organism>
<accession>Q5PAV3</accession>
<name>MDH_ANAMM</name>
<sequence>MRSSRSAKVSLVGAGNIGGALAHMLGASQVVKELVLVDVAGGMTEGKVLDVGQALALLGSDVYITGGSDYAAIEHSDAVVVTAGIPRKEGMSREDLLNTNAAVVRNIAENIAKYSPGALVIVVTNPLDAMVWCMYKYSGLPANRVVGMAGVLDSARFSFFLARHMNVSVSSVSAMVLGGHGDLMLPLLRYSTVGGVPVESLIESGRLNRDDIAAIVERTRKGGEEIVKLLKTGSAYCAPAASCAHMLESYVRDKRSIMPCSAYLDGQYGVRDLFVGVPVIIGEKGVEEVVEFPLTAEEQAVFDQSVELIRGSVSAIS</sequence>
<protein>
    <recommendedName>
        <fullName evidence="1">Malate dehydrogenase</fullName>
        <ecNumber evidence="1">1.1.1.37</ecNumber>
    </recommendedName>
</protein>
<dbReference type="EC" id="1.1.1.37" evidence="1"/>
<dbReference type="EMBL" id="CP000030">
    <property type="protein sequence ID" value="AAV86577.1"/>
    <property type="molecule type" value="Genomic_DNA"/>
</dbReference>
<dbReference type="RefSeq" id="WP_011114338.1">
    <property type="nucleotide sequence ID" value="NC_004842.2"/>
</dbReference>
<dbReference type="SMR" id="Q5PAV3"/>
<dbReference type="KEGG" id="ama:AM564"/>
<dbReference type="HOGENOM" id="CLU_045401_2_1_5"/>
<dbReference type="GO" id="GO:0004459">
    <property type="term" value="F:L-lactate dehydrogenase activity"/>
    <property type="evidence" value="ECO:0007669"/>
    <property type="project" value="TreeGrafter"/>
</dbReference>
<dbReference type="GO" id="GO:0030060">
    <property type="term" value="F:L-malate dehydrogenase (NAD+) activity"/>
    <property type="evidence" value="ECO:0007669"/>
    <property type="project" value="UniProtKB-UniRule"/>
</dbReference>
<dbReference type="GO" id="GO:0006089">
    <property type="term" value="P:lactate metabolic process"/>
    <property type="evidence" value="ECO:0007669"/>
    <property type="project" value="TreeGrafter"/>
</dbReference>
<dbReference type="GO" id="GO:0006099">
    <property type="term" value="P:tricarboxylic acid cycle"/>
    <property type="evidence" value="ECO:0007669"/>
    <property type="project" value="UniProtKB-UniRule"/>
</dbReference>
<dbReference type="CDD" id="cd01339">
    <property type="entry name" value="LDH-like_MDH"/>
    <property type="match status" value="1"/>
</dbReference>
<dbReference type="FunFam" id="3.40.50.720:FF:000018">
    <property type="entry name" value="Malate dehydrogenase"/>
    <property type="match status" value="1"/>
</dbReference>
<dbReference type="FunFam" id="3.90.110.10:FF:000004">
    <property type="entry name" value="Malate dehydrogenase"/>
    <property type="match status" value="1"/>
</dbReference>
<dbReference type="Gene3D" id="3.90.110.10">
    <property type="entry name" value="Lactate dehydrogenase/glycoside hydrolase, family 4, C-terminal"/>
    <property type="match status" value="1"/>
</dbReference>
<dbReference type="Gene3D" id="3.40.50.720">
    <property type="entry name" value="NAD(P)-binding Rossmann-like Domain"/>
    <property type="match status" value="1"/>
</dbReference>
<dbReference type="HAMAP" id="MF_00487">
    <property type="entry name" value="Malate_dehydrog_3"/>
    <property type="match status" value="1"/>
</dbReference>
<dbReference type="InterPro" id="IPR001557">
    <property type="entry name" value="L-lactate/malate_DH"/>
</dbReference>
<dbReference type="InterPro" id="IPR022383">
    <property type="entry name" value="Lactate/malate_DH_C"/>
</dbReference>
<dbReference type="InterPro" id="IPR001236">
    <property type="entry name" value="Lactate/malate_DH_N"/>
</dbReference>
<dbReference type="InterPro" id="IPR015955">
    <property type="entry name" value="Lactate_DH/Glyco_Ohase_4_C"/>
</dbReference>
<dbReference type="InterPro" id="IPR011275">
    <property type="entry name" value="Malate_DH_type3"/>
</dbReference>
<dbReference type="InterPro" id="IPR036291">
    <property type="entry name" value="NAD(P)-bd_dom_sf"/>
</dbReference>
<dbReference type="NCBIfam" id="TIGR01763">
    <property type="entry name" value="MalateDH_bact"/>
    <property type="match status" value="1"/>
</dbReference>
<dbReference type="NCBIfam" id="NF004863">
    <property type="entry name" value="PRK06223.1"/>
    <property type="match status" value="1"/>
</dbReference>
<dbReference type="PANTHER" id="PTHR43128">
    <property type="entry name" value="L-2-HYDROXYCARBOXYLATE DEHYDROGENASE (NAD(P)(+))"/>
    <property type="match status" value="1"/>
</dbReference>
<dbReference type="PANTHER" id="PTHR43128:SF16">
    <property type="entry name" value="L-LACTATE DEHYDROGENASE"/>
    <property type="match status" value="1"/>
</dbReference>
<dbReference type="Pfam" id="PF02866">
    <property type="entry name" value="Ldh_1_C"/>
    <property type="match status" value="1"/>
</dbReference>
<dbReference type="Pfam" id="PF00056">
    <property type="entry name" value="Ldh_1_N"/>
    <property type="match status" value="1"/>
</dbReference>
<dbReference type="PIRSF" id="PIRSF000102">
    <property type="entry name" value="Lac_mal_DH"/>
    <property type="match status" value="1"/>
</dbReference>
<dbReference type="PRINTS" id="PR00086">
    <property type="entry name" value="LLDHDRGNASE"/>
</dbReference>
<dbReference type="SUPFAM" id="SSF56327">
    <property type="entry name" value="LDH C-terminal domain-like"/>
    <property type="match status" value="1"/>
</dbReference>
<dbReference type="SUPFAM" id="SSF51735">
    <property type="entry name" value="NAD(P)-binding Rossmann-fold domains"/>
    <property type="match status" value="1"/>
</dbReference>
<comment type="function">
    <text evidence="1">Catalyzes the reversible oxidation of malate to oxaloacetate.</text>
</comment>
<comment type="catalytic activity">
    <reaction evidence="1">
        <text>(S)-malate + NAD(+) = oxaloacetate + NADH + H(+)</text>
        <dbReference type="Rhea" id="RHEA:21432"/>
        <dbReference type="ChEBI" id="CHEBI:15378"/>
        <dbReference type="ChEBI" id="CHEBI:15589"/>
        <dbReference type="ChEBI" id="CHEBI:16452"/>
        <dbReference type="ChEBI" id="CHEBI:57540"/>
        <dbReference type="ChEBI" id="CHEBI:57945"/>
        <dbReference type="EC" id="1.1.1.37"/>
    </reaction>
</comment>
<comment type="similarity">
    <text evidence="1">Belongs to the LDH/MDH superfamily. MDH type 3 family.</text>
</comment>
<reference key="1">
    <citation type="journal article" date="2005" name="Proc. Natl. Acad. Sci. U.S.A.">
        <title>Complete genome sequencing of Anaplasma marginale reveals that the surface is skewed to two superfamilies of outer membrane proteins.</title>
        <authorList>
            <person name="Brayton K.A."/>
            <person name="Kappmeyer L.S."/>
            <person name="Herndon D.R."/>
            <person name="Dark M.J."/>
            <person name="Tibbals D.L."/>
            <person name="Palmer G.H."/>
            <person name="McGuire T.C."/>
            <person name="Knowles D.P. Jr."/>
        </authorList>
    </citation>
    <scope>NUCLEOTIDE SEQUENCE [LARGE SCALE GENOMIC DNA]</scope>
    <source>
        <strain>St. Maries</strain>
    </source>
</reference>
<evidence type="ECO:0000255" key="1">
    <source>
        <dbReference type="HAMAP-Rule" id="MF_00487"/>
    </source>
</evidence>
<feature type="chain" id="PRO_0000113420" description="Malate dehydrogenase">
    <location>
        <begin position="1"/>
        <end position="317"/>
    </location>
</feature>
<feature type="active site" description="Proton acceptor" evidence="1">
    <location>
        <position position="180"/>
    </location>
</feature>
<feature type="binding site" evidence="1">
    <location>
        <begin position="13"/>
        <end position="18"/>
    </location>
    <ligand>
        <name>NAD(+)</name>
        <dbReference type="ChEBI" id="CHEBI:57540"/>
    </ligand>
</feature>
<feature type="binding site" evidence="1">
    <location>
        <position position="38"/>
    </location>
    <ligand>
        <name>NAD(+)</name>
        <dbReference type="ChEBI" id="CHEBI:57540"/>
    </ligand>
</feature>
<feature type="binding site" evidence="1">
    <location>
        <position position="87"/>
    </location>
    <ligand>
        <name>substrate</name>
    </ligand>
</feature>
<feature type="binding site" evidence="1">
    <location>
        <position position="93"/>
    </location>
    <ligand>
        <name>substrate</name>
    </ligand>
</feature>
<feature type="binding site" evidence="1">
    <location>
        <position position="100"/>
    </location>
    <ligand>
        <name>NAD(+)</name>
        <dbReference type="ChEBI" id="CHEBI:57540"/>
    </ligand>
</feature>
<feature type="binding site" evidence="1">
    <location>
        <begin position="123"/>
        <end position="125"/>
    </location>
    <ligand>
        <name>NAD(+)</name>
        <dbReference type="ChEBI" id="CHEBI:57540"/>
    </ligand>
</feature>
<feature type="binding site" evidence="1">
    <location>
        <position position="125"/>
    </location>
    <ligand>
        <name>substrate</name>
    </ligand>
</feature>
<feature type="binding site" evidence="1">
    <location>
        <position position="156"/>
    </location>
    <ligand>
        <name>substrate</name>
    </ligand>
</feature>
<gene>
    <name evidence="1" type="primary">mdh</name>
    <name type="ordered locus">AM564</name>
</gene>